<proteinExistence type="evidence at protein level"/>
<reference key="1">
    <citation type="journal article" date="2001" name="Arch. Microbiol.">
        <title>Genetic and functional characterization of dpp genes encoding a dipeptide transport system in Lactococcus lactis.</title>
        <authorList>
            <person name="Sanz Y."/>
            <person name="Lanfermeijer F.C."/>
            <person name="Renault P."/>
            <person name="Bolotin A."/>
            <person name="Konings W.N."/>
            <person name="Poolman B."/>
        </authorList>
    </citation>
    <scope>NUCLEOTIDE SEQUENCE [GENOMIC DNA]</scope>
    <scope>FUNCTION</scope>
    <scope>SUBUNIT</scope>
    <scope>SUBCELLULAR LOCATION</scope>
    <scope>INDUCTION</scope>
    <scope>DISRUPTION PHENOTYPE</scope>
    <source>
        <strain>MG1363</strain>
    </source>
</reference>
<reference key="2">
    <citation type="journal article" date="2007" name="J. Bacteriol.">
        <title>The complete genome sequence of the lactic acid bacterial paradigm Lactococcus lactis subsp. cremoris MG1363.</title>
        <authorList>
            <person name="Wegmann U."/>
            <person name="O'Connell-Motherway M."/>
            <person name="Zomer A."/>
            <person name="Buist G."/>
            <person name="Shearman C."/>
            <person name="Canchaya C."/>
            <person name="Ventura M."/>
            <person name="Goesmann A."/>
            <person name="Gasson M.J."/>
            <person name="Kuipers O.P."/>
            <person name="van Sinderen D."/>
            <person name="Kok J."/>
        </authorList>
    </citation>
    <scope>NUCLEOTIDE SEQUENCE [LARGE SCALE GENOMIC DNA]</scope>
    <source>
        <strain>MG1363</strain>
    </source>
</reference>
<reference key="3">
    <citation type="journal article" date="2000" name="Biochemistry">
        <title>Kinetics and structural requirements for the binding protein of the Di-tripeptide transport system of Lactococcus lactis.</title>
        <authorList>
            <person name="Sanz Y."/>
            <person name="Lanfermeijer F.C."/>
            <person name="Konings W.N."/>
            <person name="Poolman B."/>
        </authorList>
    </citation>
    <scope>FUNCTION</scope>
    <source>
        <strain>MG1363</strain>
    </source>
</reference>
<keyword id="KW-1003">Cell membrane</keyword>
<keyword id="KW-0449">Lipoprotein</keyword>
<keyword id="KW-0472">Membrane</keyword>
<keyword id="KW-0564">Palmitate</keyword>
<keyword id="KW-0571">Peptide transport</keyword>
<keyword id="KW-0653">Protein transport</keyword>
<keyword id="KW-0732">Signal</keyword>
<keyword id="KW-0813">Transport</keyword>
<sequence>MKQAKIIGLSTVIALSGIILVACGSKTSEQKNIQFSIPTDVASLDTTILTDQYSYDVAGNVEEGLTRVDSKGNAALALAKSIDVSKDGLTYTVTLKDNLKWSNGDKLTAKDFVYSWKRAVDPKTGSEYAYLMGAVSGANDIISGKSSLDTLGIKAESDTEFTVTLAQPTPYFKFLLSEPVYYPLDQKVVDKYGKQYGTSSDKTVYNGPFMFKSDKAWTGTNKNFSIYANPNYYDKSAVKSKQIDFQVISNANTGAQLYKQGKLDFTLLSTTDLINANKKTEGYTVFKQARTDYIEYNQSGKNASSPDAQKALANQDIRQALNLATNRAEVVKTALPGSTAATSFTPVGMSKTSTGEDFATYAKQDYSYDPTKAKELWAKGLKELGLTKLSLSLEAAGDLAPSEATANFLQTAYQQNLPGLTVNLKLVPFKQRLNDAQNGNFDMVLSGWGGDYAEPSTFLQLFTTGQSYNDGKFSSKTYDDAFKAATTTPDVLEPAKVDEHYKAAEAALYEGSYINPIDFQANPALMNPKITGLEFHSTGLAYDLKSAYIK</sequence>
<gene>
    <name evidence="4" type="primary">dppA</name>
    <name evidence="7" type="ordered locus">llmg_0362</name>
</gene>
<organism>
    <name type="scientific">Lactococcus lactis subsp. cremoris (strain MG1363)</name>
    <dbReference type="NCBI Taxonomy" id="416870"/>
    <lineage>
        <taxon>Bacteria</taxon>
        <taxon>Bacillati</taxon>
        <taxon>Bacillota</taxon>
        <taxon>Bacilli</taxon>
        <taxon>Lactobacillales</taxon>
        <taxon>Streptococcaceae</taxon>
        <taxon>Lactococcus</taxon>
        <taxon>Lactococcus cremoris subsp. cremoris</taxon>
    </lineage>
</organism>
<evidence type="ECO:0000255" key="1">
    <source>
        <dbReference type="PROSITE-ProRule" id="PRU00303"/>
    </source>
</evidence>
<evidence type="ECO:0000269" key="2">
    <source>
    </source>
</evidence>
<evidence type="ECO:0000269" key="3">
    <source>
    </source>
</evidence>
<evidence type="ECO:0000303" key="4">
    <source>
    </source>
</evidence>
<evidence type="ECO:0000305" key="5"/>
<evidence type="ECO:0000305" key="6">
    <source>
    </source>
</evidence>
<evidence type="ECO:0000312" key="7">
    <source>
        <dbReference type="EMBL" id="CAL96967.1"/>
    </source>
</evidence>
<accession>A2RI74</accession>
<accession>Q93QH8</accession>
<comment type="function">
    <text evidence="2 3">Part of the ABC transporter DppABCDF involved in dipeptide transport (PubMed:11409543). Binds di- and tripeptides with high affinity. Requires a free N-terminal alpha-amino group and an alpha-peptide bound contiguous with the N-terminal amino group, has a strong selectivity for L-residues, and shows preference for dipeptides containing methionine or arginine, followed by hydrophobic tripeptides consisting of leucine or valine residues (PubMed:10769143).</text>
</comment>
<comment type="subunit">
    <text evidence="6">The complex is composed of two ATP-binding proteins (DppD and DppF), two transmembrane proteins (DppB and DppC) and a solute-binding protein (DppA).</text>
</comment>
<comment type="subcellular location">
    <subcellularLocation>
        <location evidence="1 3">Cell membrane</location>
        <topology evidence="1">Lipid-anchor</topology>
    </subcellularLocation>
</comment>
<comment type="induction">
    <text evidence="3">Expression is regulated by the peptide content of the growth media.</text>
</comment>
<comment type="disruption phenotype">
    <text evidence="3">Inactivation of the gene impairs growth on low concentrations of di-valine.</text>
</comment>
<comment type="similarity">
    <text evidence="5">Belongs to the bacterial solute-binding protein 5 family.</text>
</comment>
<feature type="signal peptide" evidence="1">
    <location>
        <begin position="1"/>
        <end position="22"/>
    </location>
</feature>
<feature type="chain" id="PRO_5002645778" description="Dipeptide-binding protein" evidence="1">
    <location>
        <begin position="23"/>
        <end position="550"/>
    </location>
</feature>
<feature type="lipid moiety-binding region" description="N-palmitoyl cysteine" evidence="1">
    <location>
        <position position="23"/>
    </location>
</feature>
<feature type="lipid moiety-binding region" description="S-diacylglycerol cysteine" evidence="1">
    <location>
        <position position="23"/>
    </location>
</feature>
<protein>
    <recommendedName>
        <fullName evidence="5">Dipeptide-binding protein</fullName>
    </recommendedName>
</protein>
<name>DPPA_LACLM</name>
<dbReference type="EMBL" id="AF247635">
    <property type="protein sequence ID" value="AAK58896.1"/>
    <property type="molecule type" value="Genomic_DNA"/>
</dbReference>
<dbReference type="EMBL" id="AM406671">
    <property type="protein sequence ID" value="CAL96967.1"/>
    <property type="molecule type" value="Genomic_DNA"/>
</dbReference>
<dbReference type="RefSeq" id="WP_011834420.1">
    <property type="nucleotide sequence ID" value="NC_009004.1"/>
</dbReference>
<dbReference type="SMR" id="A2RI74"/>
<dbReference type="STRING" id="416870.llmg_0362"/>
<dbReference type="KEGG" id="llm:llmg_0362"/>
<dbReference type="eggNOG" id="COG4166">
    <property type="taxonomic scope" value="Bacteria"/>
</dbReference>
<dbReference type="HOGENOM" id="CLU_017028_0_4_9"/>
<dbReference type="OrthoDB" id="403896at2"/>
<dbReference type="PhylomeDB" id="A2RI74"/>
<dbReference type="Proteomes" id="UP000000364">
    <property type="component" value="Chromosome"/>
</dbReference>
<dbReference type="GO" id="GO:0043190">
    <property type="term" value="C:ATP-binding cassette (ABC) transporter complex"/>
    <property type="evidence" value="ECO:0007669"/>
    <property type="project" value="InterPro"/>
</dbReference>
<dbReference type="GO" id="GO:0042597">
    <property type="term" value="C:periplasmic space"/>
    <property type="evidence" value="ECO:0007669"/>
    <property type="project" value="UniProtKB-ARBA"/>
</dbReference>
<dbReference type="GO" id="GO:1904680">
    <property type="term" value="F:peptide transmembrane transporter activity"/>
    <property type="evidence" value="ECO:0007669"/>
    <property type="project" value="TreeGrafter"/>
</dbReference>
<dbReference type="GO" id="GO:0015833">
    <property type="term" value="P:peptide transport"/>
    <property type="evidence" value="ECO:0007669"/>
    <property type="project" value="UniProtKB-KW"/>
</dbReference>
<dbReference type="GO" id="GO:0015031">
    <property type="term" value="P:protein transport"/>
    <property type="evidence" value="ECO:0007669"/>
    <property type="project" value="UniProtKB-KW"/>
</dbReference>
<dbReference type="CDD" id="cd08504">
    <property type="entry name" value="PBP2_OppA"/>
    <property type="match status" value="1"/>
</dbReference>
<dbReference type="FunFam" id="3.90.76.10:FF:000001">
    <property type="entry name" value="Oligopeptide ABC transporter substrate-binding protein"/>
    <property type="match status" value="1"/>
</dbReference>
<dbReference type="Gene3D" id="3.90.76.10">
    <property type="entry name" value="Dipeptide-binding Protein, Domain 1"/>
    <property type="match status" value="1"/>
</dbReference>
<dbReference type="Gene3D" id="3.10.105.10">
    <property type="entry name" value="Dipeptide-binding Protein, Domain 3"/>
    <property type="match status" value="1"/>
</dbReference>
<dbReference type="Gene3D" id="3.40.190.10">
    <property type="entry name" value="Periplasmic binding protein-like II"/>
    <property type="match status" value="1"/>
</dbReference>
<dbReference type="InterPro" id="IPR030678">
    <property type="entry name" value="Peptide/Ni-bd"/>
</dbReference>
<dbReference type="InterPro" id="IPR039424">
    <property type="entry name" value="SBP_5"/>
</dbReference>
<dbReference type="InterPro" id="IPR023765">
    <property type="entry name" value="SBP_5_CS"/>
</dbReference>
<dbReference type="InterPro" id="IPR000914">
    <property type="entry name" value="SBP_5_dom"/>
</dbReference>
<dbReference type="PANTHER" id="PTHR30290">
    <property type="entry name" value="PERIPLASMIC BINDING COMPONENT OF ABC TRANSPORTER"/>
    <property type="match status" value="1"/>
</dbReference>
<dbReference type="PANTHER" id="PTHR30290:SF10">
    <property type="entry name" value="PERIPLASMIC OLIGOPEPTIDE-BINDING PROTEIN-RELATED"/>
    <property type="match status" value="1"/>
</dbReference>
<dbReference type="Pfam" id="PF00496">
    <property type="entry name" value="SBP_bac_5"/>
    <property type="match status" value="1"/>
</dbReference>
<dbReference type="PIRSF" id="PIRSF002741">
    <property type="entry name" value="MppA"/>
    <property type="match status" value="1"/>
</dbReference>
<dbReference type="SUPFAM" id="SSF53850">
    <property type="entry name" value="Periplasmic binding protein-like II"/>
    <property type="match status" value="1"/>
</dbReference>
<dbReference type="PROSITE" id="PS51257">
    <property type="entry name" value="PROKAR_LIPOPROTEIN"/>
    <property type="match status" value="1"/>
</dbReference>
<dbReference type="PROSITE" id="PS01040">
    <property type="entry name" value="SBP_BACTERIAL_5"/>
    <property type="match status" value="1"/>
</dbReference>